<feature type="chain" id="PRO_1000022039" description="Isoleucine--tRNA ligase">
    <location>
        <begin position="1"/>
        <end position="937"/>
    </location>
</feature>
<feature type="short sequence motif" description="'HIGH' region">
    <location>
        <begin position="58"/>
        <end position="68"/>
    </location>
</feature>
<feature type="short sequence motif" description="'KMSKS' region">
    <location>
        <begin position="602"/>
        <end position="606"/>
    </location>
</feature>
<feature type="binding site" evidence="1">
    <location>
        <position position="561"/>
    </location>
    <ligand>
        <name>L-isoleucyl-5'-AMP</name>
        <dbReference type="ChEBI" id="CHEBI:178002"/>
    </ligand>
</feature>
<feature type="binding site" evidence="1">
    <location>
        <position position="605"/>
    </location>
    <ligand>
        <name>ATP</name>
        <dbReference type="ChEBI" id="CHEBI:30616"/>
    </ligand>
</feature>
<feature type="binding site" evidence="1">
    <location>
        <position position="900"/>
    </location>
    <ligand>
        <name>Zn(2+)</name>
        <dbReference type="ChEBI" id="CHEBI:29105"/>
    </ligand>
</feature>
<feature type="binding site" evidence="1">
    <location>
        <position position="903"/>
    </location>
    <ligand>
        <name>Zn(2+)</name>
        <dbReference type="ChEBI" id="CHEBI:29105"/>
    </ligand>
</feature>
<feature type="binding site" evidence="1">
    <location>
        <position position="920"/>
    </location>
    <ligand>
        <name>Zn(2+)</name>
        <dbReference type="ChEBI" id="CHEBI:29105"/>
    </ligand>
</feature>
<feature type="binding site" evidence="1">
    <location>
        <position position="923"/>
    </location>
    <ligand>
        <name>Zn(2+)</name>
        <dbReference type="ChEBI" id="CHEBI:29105"/>
    </ligand>
</feature>
<accession>Q0VSE1</accession>
<comment type="function">
    <text evidence="1">Catalyzes the attachment of isoleucine to tRNA(Ile). As IleRS can inadvertently accommodate and process structurally similar amino acids such as valine, to avoid such errors it has two additional distinct tRNA(Ile)-dependent editing activities. One activity is designated as 'pretransfer' editing and involves the hydrolysis of activated Val-AMP. The other activity is designated 'posttransfer' editing and involves deacylation of mischarged Val-tRNA(Ile).</text>
</comment>
<comment type="catalytic activity">
    <reaction evidence="1">
        <text>tRNA(Ile) + L-isoleucine + ATP = L-isoleucyl-tRNA(Ile) + AMP + diphosphate</text>
        <dbReference type="Rhea" id="RHEA:11060"/>
        <dbReference type="Rhea" id="RHEA-COMP:9666"/>
        <dbReference type="Rhea" id="RHEA-COMP:9695"/>
        <dbReference type="ChEBI" id="CHEBI:30616"/>
        <dbReference type="ChEBI" id="CHEBI:33019"/>
        <dbReference type="ChEBI" id="CHEBI:58045"/>
        <dbReference type="ChEBI" id="CHEBI:78442"/>
        <dbReference type="ChEBI" id="CHEBI:78528"/>
        <dbReference type="ChEBI" id="CHEBI:456215"/>
        <dbReference type="EC" id="6.1.1.5"/>
    </reaction>
</comment>
<comment type="cofactor">
    <cofactor evidence="1">
        <name>Zn(2+)</name>
        <dbReference type="ChEBI" id="CHEBI:29105"/>
    </cofactor>
    <text evidence="1">Binds 1 zinc ion per subunit.</text>
</comment>
<comment type="subunit">
    <text evidence="1">Monomer.</text>
</comment>
<comment type="subcellular location">
    <subcellularLocation>
        <location evidence="1">Cytoplasm</location>
    </subcellularLocation>
</comment>
<comment type="domain">
    <text evidence="1">IleRS has two distinct active sites: one for aminoacylation and one for editing. The misactivated valine is translocated from the active site to the editing site, which sterically excludes the correctly activated isoleucine. The single editing site contains two valyl binding pockets, one specific for each substrate (Val-AMP or Val-tRNA(Ile)).</text>
</comment>
<comment type="similarity">
    <text evidence="1">Belongs to the class-I aminoacyl-tRNA synthetase family. IleS type 1 subfamily.</text>
</comment>
<proteinExistence type="inferred from homology"/>
<evidence type="ECO:0000255" key="1">
    <source>
        <dbReference type="HAMAP-Rule" id="MF_02002"/>
    </source>
</evidence>
<organism>
    <name type="scientific">Alcanivorax borkumensis (strain ATCC 700651 / DSM 11573 / NCIMB 13689 / SK2)</name>
    <dbReference type="NCBI Taxonomy" id="393595"/>
    <lineage>
        <taxon>Bacteria</taxon>
        <taxon>Pseudomonadati</taxon>
        <taxon>Pseudomonadota</taxon>
        <taxon>Gammaproteobacteria</taxon>
        <taxon>Oceanospirillales</taxon>
        <taxon>Alcanivoracaceae</taxon>
        <taxon>Alcanivorax</taxon>
    </lineage>
</organism>
<protein>
    <recommendedName>
        <fullName evidence="1">Isoleucine--tRNA ligase</fullName>
        <ecNumber evidence="1">6.1.1.5</ecNumber>
    </recommendedName>
    <alternativeName>
        <fullName evidence="1">Isoleucyl-tRNA synthetase</fullName>
        <shortName evidence="1">IleRS</shortName>
    </alternativeName>
</protein>
<keyword id="KW-0030">Aminoacyl-tRNA synthetase</keyword>
<keyword id="KW-0067">ATP-binding</keyword>
<keyword id="KW-0963">Cytoplasm</keyword>
<keyword id="KW-0436">Ligase</keyword>
<keyword id="KW-0479">Metal-binding</keyword>
<keyword id="KW-0547">Nucleotide-binding</keyword>
<keyword id="KW-0648">Protein biosynthesis</keyword>
<keyword id="KW-1185">Reference proteome</keyword>
<keyword id="KW-0862">Zinc</keyword>
<gene>
    <name evidence="1" type="primary">ileS</name>
    <name type="ordered locus">ABO_0459</name>
</gene>
<sequence length="937" mass="104314">MTDYKATLNLPQTGFPMKAGLSQREPARLKEWQQKQLYQKIREAFAGRPKFILHDGPPYANGDIHIGHAVNKILKDMIVKSRTLAGFDAPYVPGWDCHGLPIELMVEKKVGKAGHKVDAGTFRKKCREYASKQVAGQKSDFMRLGVLGDWDNPYLTMDFTFEANIIRSLGKIVDNGHLQQGFKPVHWCLDCGSALAEAEVEYEDKISPAIDVAFPVVDVADFVARSGIEASAPALVIWTTTPWTLPANRAVAVHPELDYVLLSGELSGVARELLVAEALADDLVTRWGLENVTRSAAVAGSKLEMLALQHPFLEAQVPVVFGEHVTTDAGTGLVHTAPGHGVDDFMVGKQYDLDPISPVLDNGLFREDLPVVGGLHVSKANEPVIEALKDSGNLVKLAKIEHSYPHCWRHKTPLIFRATAQWFVSMDQAGLLPRARQEIDKVQWLPEWGKARIEGMLTDRPDWCISRQRTWGVPIALFVNKETSELHPQTPALIEQVAQRVEKAGVDAWFDLDPAELLGDEADQYSKVTDTLDVWFDSGVTHYCVLDQREQLRAPADLYLEGSDQHRGWFQSSLLTSLAIRDAAPYSTVLTHGFTVDEHGRKMSKSVGNVIAPQEVWNDLGADILRLWVCATDYRGEMSVSKDILKQMGDSYRRIRNTSRFLLSNLSGFEPATDALQPEQMLALDRYIVDRALQVQAEIQDLYDGYHFHQVYQKLHNFCALDLGGFYLDIIKDRQYTTQADSVARRSCQTALYHIAQALVRWMAPVLSFTAEEIYENLPGERLDSVFLAEWYDGLFALADNADMGRAFWDKVQDAKQAVNKAIEGARAAKLIKGSLSAEVVLFVDAEQNALLQRLGDELRFVTITSAAVLKPLAEAPAELEDTSVAGLKVQVLASDHAKCARCWHHQPDVGSHAEHPELCGRCITNVEGDGEVRHYA</sequence>
<dbReference type="EC" id="6.1.1.5" evidence="1"/>
<dbReference type="EMBL" id="AM286690">
    <property type="protein sequence ID" value="CAL15907.1"/>
    <property type="molecule type" value="Genomic_DNA"/>
</dbReference>
<dbReference type="RefSeq" id="WP_011587745.1">
    <property type="nucleotide sequence ID" value="NC_008260.1"/>
</dbReference>
<dbReference type="SMR" id="Q0VSE1"/>
<dbReference type="STRING" id="393595.ABO_0459"/>
<dbReference type="KEGG" id="abo:ABO_0459"/>
<dbReference type="eggNOG" id="COG0060">
    <property type="taxonomic scope" value="Bacteria"/>
</dbReference>
<dbReference type="HOGENOM" id="CLU_001493_7_1_6"/>
<dbReference type="OrthoDB" id="9810365at2"/>
<dbReference type="Proteomes" id="UP000008871">
    <property type="component" value="Chromosome"/>
</dbReference>
<dbReference type="GO" id="GO:0005829">
    <property type="term" value="C:cytosol"/>
    <property type="evidence" value="ECO:0007669"/>
    <property type="project" value="TreeGrafter"/>
</dbReference>
<dbReference type="GO" id="GO:0002161">
    <property type="term" value="F:aminoacyl-tRNA deacylase activity"/>
    <property type="evidence" value="ECO:0007669"/>
    <property type="project" value="InterPro"/>
</dbReference>
<dbReference type="GO" id="GO:0005524">
    <property type="term" value="F:ATP binding"/>
    <property type="evidence" value="ECO:0007669"/>
    <property type="project" value="UniProtKB-UniRule"/>
</dbReference>
<dbReference type="GO" id="GO:0004822">
    <property type="term" value="F:isoleucine-tRNA ligase activity"/>
    <property type="evidence" value="ECO:0007669"/>
    <property type="project" value="UniProtKB-UniRule"/>
</dbReference>
<dbReference type="GO" id="GO:0000049">
    <property type="term" value="F:tRNA binding"/>
    <property type="evidence" value="ECO:0007669"/>
    <property type="project" value="InterPro"/>
</dbReference>
<dbReference type="GO" id="GO:0008270">
    <property type="term" value="F:zinc ion binding"/>
    <property type="evidence" value="ECO:0007669"/>
    <property type="project" value="UniProtKB-UniRule"/>
</dbReference>
<dbReference type="GO" id="GO:0006428">
    <property type="term" value="P:isoleucyl-tRNA aminoacylation"/>
    <property type="evidence" value="ECO:0007669"/>
    <property type="project" value="UniProtKB-UniRule"/>
</dbReference>
<dbReference type="CDD" id="cd07960">
    <property type="entry name" value="Anticodon_Ia_Ile_BEm"/>
    <property type="match status" value="1"/>
</dbReference>
<dbReference type="CDD" id="cd00818">
    <property type="entry name" value="IleRS_core"/>
    <property type="match status" value="1"/>
</dbReference>
<dbReference type="FunFam" id="1.10.730.20:FF:000001">
    <property type="entry name" value="Isoleucine--tRNA ligase"/>
    <property type="match status" value="1"/>
</dbReference>
<dbReference type="FunFam" id="3.40.50.620:FF:000042">
    <property type="entry name" value="Isoleucine--tRNA ligase"/>
    <property type="match status" value="1"/>
</dbReference>
<dbReference type="FunFam" id="3.40.50.620:FF:000048">
    <property type="entry name" value="Isoleucine--tRNA ligase"/>
    <property type="match status" value="1"/>
</dbReference>
<dbReference type="Gene3D" id="1.10.730.20">
    <property type="match status" value="1"/>
</dbReference>
<dbReference type="Gene3D" id="3.40.50.620">
    <property type="entry name" value="HUPs"/>
    <property type="match status" value="2"/>
</dbReference>
<dbReference type="Gene3D" id="1.10.10.830">
    <property type="entry name" value="Ile-tRNA synthetase CP2 domain-like"/>
    <property type="match status" value="1"/>
</dbReference>
<dbReference type="Gene3D" id="3.90.740.10">
    <property type="entry name" value="Valyl/Leucyl/Isoleucyl-tRNA synthetase, editing domain"/>
    <property type="match status" value="1"/>
</dbReference>
<dbReference type="HAMAP" id="MF_02002">
    <property type="entry name" value="Ile_tRNA_synth_type1"/>
    <property type="match status" value="1"/>
</dbReference>
<dbReference type="InterPro" id="IPR001412">
    <property type="entry name" value="aa-tRNA-synth_I_CS"/>
</dbReference>
<dbReference type="InterPro" id="IPR002300">
    <property type="entry name" value="aa-tRNA-synth_Ia"/>
</dbReference>
<dbReference type="InterPro" id="IPR033708">
    <property type="entry name" value="Anticodon_Ile_BEm"/>
</dbReference>
<dbReference type="InterPro" id="IPR002301">
    <property type="entry name" value="Ile-tRNA-ligase"/>
</dbReference>
<dbReference type="InterPro" id="IPR023585">
    <property type="entry name" value="Ile-tRNA-ligase_type1"/>
</dbReference>
<dbReference type="InterPro" id="IPR050081">
    <property type="entry name" value="Ile-tRNA_ligase"/>
</dbReference>
<dbReference type="InterPro" id="IPR013155">
    <property type="entry name" value="M/V/L/I-tRNA-synth_anticd-bd"/>
</dbReference>
<dbReference type="InterPro" id="IPR014729">
    <property type="entry name" value="Rossmann-like_a/b/a_fold"/>
</dbReference>
<dbReference type="InterPro" id="IPR009080">
    <property type="entry name" value="tRNAsynth_Ia_anticodon-bd"/>
</dbReference>
<dbReference type="InterPro" id="IPR009008">
    <property type="entry name" value="Val/Leu/Ile-tRNA-synth_edit"/>
</dbReference>
<dbReference type="InterPro" id="IPR010663">
    <property type="entry name" value="Znf_FPG/IleRS"/>
</dbReference>
<dbReference type="NCBIfam" id="TIGR00392">
    <property type="entry name" value="ileS"/>
    <property type="match status" value="1"/>
</dbReference>
<dbReference type="PANTHER" id="PTHR42765:SF1">
    <property type="entry name" value="ISOLEUCINE--TRNA LIGASE, MITOCHONDRIAL"/>
    <property type="match status" value="1"/>
</dbReference>
<dbReference type="PANTHER" id="PTHR42765">
    <property type="entry name" value="SOLEUCYL-TRNA SYNTHETASE"/>
    <property type="match status" value="1"/>
</dbReference>
<dbReference type="Pfam" id="PF08264">
    <property type="entry name" value="Anticodon_1"/>
    <property type="match status" value="1"/>
</dbReference>
<dbReference type="Pfam" id="PF00133">
    <property type="entry name" value="tRNA-synt_1"/>
    <property type="match status" value="1"/>
</dbReference>
<dbReference type="Pfam" id="PF06827">
    <property type="entry name" value="zf-FPG_IleRS"/>
    <property type="match status" value="1"/>
</dbReference>
<dbReference type="PRINTS" id="PR00984">
    <property type="entry name" value="TRNASYNTHILE"/>
</dbReference>
<dbReference type="SUPFAM" id="SSF47323">
    <property type="entry name" value="Anticodon-binding domain of a subclass of class I aminoacyl-tRNA synthetases"/>
    <property type="match status" value="1"/>
</dbReference>
<dbReference type="SUPFAM" id="SSF52374">
    <property type="entry name" value="Nucleotidylyl transferase"/>
    <property type="match status" value="1"/>
</dbReference>
<dbReference type="SUPFAM" id="SSF50677">
    <property type="entry name" value="ValRS/IleRS/LeuRS editing domain"/>
    <property type="match status" value="1"/>
</dbReference>
<dbReference type="PROSITE" id="PS00178">
    <property type="entry name" value="AA_TRNA_LIGASE_I"/>
    <property type="match status" value="1"/>
</dbReference>
<name>SYI_ALCBS</name>
<reference key="1">
    <citation type="journal article" date="2006" name="Nat. Biotechnol.">
        <title>Genome sequence of the ubiquitous hydrocarbon-degrading marine bacterium Alcanivorax borkumensis.</title>
        <authorList>
            <person name="Schneiker S."/>
            <person name="Martins dos Santos V.A.P."/>
            <person name="Bartels D."/>
            <person name="Bekel T."/>
            <person name="Brecht M."/>
            <person name="Buhrmester J."/>
            <person name="Chernikova T.N."/>
            <person name="Denaro R."/>
            <person name="Ferrer M."/>
            <person name="Gertler C."/>
            <person name="Goesmann A."/>
            <person name="Golyshina O.V."/>
            <person name="Kaminski F."/>
            <person name="Khachane A.N."/>
            <person name="Lang S."/>
            <person name="Linke B."/>
            <person name="McHardy A.C."/>
            <person name="Meyer F."/>
            <person name="Nechitaylo T."/>
            <person name="Puehler A."/>
            <person name="Regenhardt D."/>
            <person name="Rupp O."/>
            <person name="Sabirova J.S."/>
            <person name="Selbitschka W."/>
            <person name="Yakimov M.M."/>
            <person name="Timmis K.N."/>
            <person name="Vorhoelter F.-J."/>
            <person name="Weidner S."/>
            <person name="Kaiser O."/>
            <person name="Golyshin P.N."/>
        </authorList>
    </citation>
    <scope>NUCLEOTIDE SEQUENCE [LARGE SCALE GENOMIC DNA]</scope>
    <source>
        <strain>ATCC 700651 / DSM 11573 / NCIMB 13689 / SK2</strain>
    </source>
</reference>